<comment type="similarity">
    <text evidence="1">Belongs to the universal ribosomal protein uS9 family.</text>
</comment>
<reference key="1">
    <citation type="journal article" date="2009" name="Appl. Environ. Microbiol.">
        <title>Rhizobium sp. strain NGR234 possesses a remarkable number of secretion systems.</title>
        <authorList>
            <person name="Schmeisser C."/>
            <person name="Liesegang H."/>
            <person name="Krysciak D."/>
            <person name="Bakkou N."/>
            <person name="Le Quere A."/>
            <person name="Wollherr A."/>
            <person name="Heinemeyer I."/>
            <person name="Morgenstern B."/>
            <person name="Pommerening-Roeser A."/>
            <person name="Flores M."/>
            <person name="Palacios R."/>
            <person name="Brenner S."/>
            <person name="Gottschalk G."/>
            <person name="Schmitz R.A."/>
            <person name="Broughton W.J."/>
            <person name="Perret X."/>
            <person name="Strittmatter A.W."/>
            <person name="Streit W.R."/>
        </authorList>
    </citation>
    <scope>NUCLEOTIDE SEQUENCE [LARGE SCALE GENOMIC DNA]</scope>
    <source>
        <strain>NBRC 101917 / NGR234</strain>
    </source>
</reference>
<sequence>MADLSALKEIATTAEPAAPVHVKKVDAQGRSYATGKRKDAVARVWVKAGSGKITVNGKPFSAYFARPVLQMILQQPIVAAARDGQFDVDATVAGGGLSGQAGAVRHGIAKALTYFEPGLRSVLKRGGFLTRDSRVVERKKYGRAKARRSFQFSKR</sequence>
<evidence type="ECO:0000255" key="1">
    <source>
        <dbReference type="HAMAP-Rule" id="MF_00532"/>
    </source>
</evidence>
<evidence type="ECO:0000305" key="2"/>
<proteinExistence type="inferred from homology"/>
<organism>
    <name type="scientific">Sinorhizobium fredii (strain NBRC 101917 / NGR234)</name>
    <dbReference type="NCBI Taxonomy" id="394"/>
    <lineage>
        <taxon>Bacteria</taxon>
        <taxon>Pseudomonadati</taxon>
        <taxon>Pseudomonadota</taxon>
        <taxon>Alphaproteobacteria</taxon>
        <taxon>Hyphomicrobiales</taxon>
        <taxon>Rhizobiaceae</taxon>
        <taxon>Sinorhizobium/Ensifer group</taxon>
        <taxon>Sinorhizobium</taxon>
    </lineage>
</organism>
<feature type="chain" id="PRO_1000146465" description="Small ribosomal subunit protein uS9">
    <location>
        <begin position="1"/>
        <end position="155"/>
    </location>
</feature>
<dbReference type="EMBL" id="CP001389">
    <property type="protein sequence ID" value="ACP24811.1"/>
    <property type="molecule type" value="Genomic_DNA"/>
</dbReference>
<dbReference type="RefSeq" id="WP_012707595.1">
    <property type="nucleotide sequence ID" value="NC_012587.1"/>
</dbReference>
<dbReference type="RefSeq" id="YP_002825564.1">
    <property type="nucleotide sequence ID" value="NC_012587.1"/>
</dbReference>
<dbReference type="SMR" id="C3MA32"/>
<dbReference type="STRING" id="394.NGR_c10220"/>
<dbReference type="KEGG" id="rhi:NGR_c10220"/>
<dbReference type="PATRIC" id="fig|394.7.peg.3843"/>
<dbReference type="eggNOG" id="COG0103">
    <property type="taxonomic scope" value="Bacteria"/>
</dbReference>
<dbReference type="HOGENOM" id="CLU_046483_2_0_5"/>
<dbReference type="OrthoDB" id="9803965at2"/>
<dbReference type="Proteomes" id="UP000001054">
    <property type="component" value="Chromosome"/>
</dbReference>
<dbReference type="GO" id="GO:0022627">
    <property type="term" value="C:cytosolic small ribosomal subunit"/>
    <property type="evidence" value="ECO:0007669"/>
    <property type="project" value="TreeGrafter"/>
</dbReference>
<dbReference type="GO" id="GO:0003723">
    <property type="term" value="F:RNA binding"/>
    <property type="evidence" value="ECO:0007669"/>
    <property type="project" value="TreeGrafter"/>
</dbReference>
<dbReference type="GO" id="GO:0003735">
    <property type="term" value="F:structural constituent of ribosome"/>
    <property type="evidence" value="ECO:0007669"/>
    <property type="project" value="InterPro"/>
</dbReference>
<dbReference type="GO" id="GO:0006412">
    <property type="term" value="P:translation"/>
    <property type="evidence" value="ECO:0007669"/>
    <property type="project" value="UniProtKB-UniRule"/>
</dbReference>
<dbReference type="FunFam" id="3.30.230.10:FF:000001">
    <property type="entry name" value="30S ribosomal protein S9"/>
    <property type="match status" value="1"/>
</dbReference>
<dbReference type="Gene3D" id="3.30.230.10">
    <property type="match status" value="1"/>
</dbReference>
<dbReference type="HAMAP" id="MF_00532_B">
    <property type="entry name" value="Ribosomal_uS9_B"/>
    <property type="match status" value="1"/>
</dbReference>
<dbReference type="InterPro" id="IPR020568">
    <property type="entry name" value="Ribosomal_Su5_D2-typ_SF"/>
</dbReference>
<dbReference type="InterPro" id="IPR000754">
    <property type="entry name" value="Ribosomal_uS9"/>
</dbReference>
<dbReference type="InterPro" id="IPR023035">
    <property type="entry name" value="Ribosomal_uS9_bac/plastid"/>
</dbReference>
<dbReference type="InterPro" id="IPR020574">
    <property type="entry name" value="Ribosomal_uS9_CS"/>
</dbReference>
<dbReference type="InterPro" id="IPR014721">
    <property type="entry name" value="Ribsml_uS5_D2-typ_fold_subgr"/>
</dbReference>
<dbReference type="NCBIfam" id="NF001099">
    <property type="entry name" value="PRK00132.1"/>
    <property type="match status" value="1"/>
</dbReference>
<dbReference type="PANTHER" id="PTHR21569">
    <property type="entry name" value="RIBOSOMAL PROTEIN S9"/>
    <property type="match status" value="1"/>
</dbReference>
<dbReference type="PANTHER" id="PTHR21569:SF1">
    <property type="entry name" value="SMALL RIBOSOMAL SUBUNIT PROTEIN US9M"/>
    <property type="match status" value="1"/>
</dbReference>
<dbReference type="Pfam" id="PF00380">
    <property type="entry name" value="Ribosomal_S9"/>
    <property type="match status" value="1"/>
</dbReference>
<dbReference type="SUPFAM" id="SSF54211">
    <property type="entry name" value="Ribosomal protein S5 domain 2-like"/>
    <property type="match status" value="1"/>
</dbReference>
<dbReference type="PROSITE" id="PS00360">
    <property type="entry name" value="RIBOSOMAL_S9"/>
    <property type="match status" value="1"/>
</dbReference>
<protein>
    <recommendedName>
        <fullName evidence="1">Small ribosomal subunit protein uS9</fullName>
    </recommendedName>
    <alternativeName>
        <fullName evidence="2">30S ribosomal protein S9</fullName>
    </alternativeName>
</protein>
<gene>
    <name evidence="1" type="primary">rpsI</name>
    <name type="ordered locus">NGR_c10220</name>
</gene>
<name>RS9_SINFN</name>
<keyword id="KW-1185">Reference proteome</keyword>
<keyword id="KW-0687">Ribonucleoprotein</keyword>
<keyword id="KW-0689">Ribosomal protein</keyword>
<accession>C3MA32</accession>